<dbReference type="EC" id="2.4.2.7" evidence="1"/>
<dbReference type="EMBL" id="CP000910">
    <property type="protein sequence ID" value="ABY22547.1"/>
    <property type="molecule type" value="Genomic_DNA"/>
</dbReference>
<dbReference type="RefSeq" id="WP_012244244.1">
    <property type="nucleotide sequence ID" value="NC_010168.1"/>
</dbReference>
<dbReference type="SMR" id="A9WQH7"/>
<dbReference type="STRING" id="288705.RSal33209_0800"/>
<dbReference type="KEGG" id="rsa:RSal33209_0800"/>
<dbReference type="eggNOG" id="COG0503">
    <property type="taxonomic scope" value="Bacteria"/>
</dbReference>
<dbReference type="HOGENOM" id="CLU_063339_3_3_11"/>
<dbReference type="UniPathway" id="UPA00588">
    <property type="reaction ID" value="UER00646"/>
</dbReference>
<dbReference type="Proteomes" id="UP000002007">
    <property type="component" value="Chromosome"/>
</dbReference>
<dbReference type="GO" id="GO:0005737">
    <property type="term" value="C:cytoplasm"/>
    <property type="evidence" value="ECO:0007669"/>
    <property type="project" value="UniProtKB-SubCell"/>
</dbReference>
<dbReference type="GO" id="GO:0002055">
    <property type="term" value="F:adenine binding"/>
    <property type="evidence" value="ECO:0007669"/>
    <property type="project" value="TreeGrafter"/>
</dbReference>
<dbReference type="GO" id="GO:0003999">
    <property type="term" value="F:adenine phosphoribosyltransferase activity"/>
    <property type="evidence" value="ECO:0007669"/>
    <property type="project" value="UniProtKB-UniRule"/>
</dbReference>
<dbReference type="GO" id="GO:0016208">
    <property type="term" value="F:AMP binding"/>
    <property type="evidence" value="ECO:0007669"/>
    <property type="project" value="TreeGrafter"/>
</dbReference>
<dbReference type="GO" id="GO:0006168">
    <property type="term" value="P:adenine salvage"/>
    <property type="evidence" value="ECO:0007669"/>
    <property type="project" value="InterPro"/>
</dbReference>
<dbReference type="GO" id="GO:0044209">
    <property type="term" value="P:AMP salvage"/>
    <property type="evidence" value="ECO:0007669"/>
    <property type="project" value="UniProtKB-UniRule"/>
</dbReference>
<dbReference type="GO" id="GO:0006166">
    <property type="term" value="P:purine ribonucleoside salvage"/>
    <property type="evidence" value="ECO:0007669"/>
    <property type="project" value="UniProtKB-KW"/>
</dbReference>
<dbReference type="CDD" id="cd06223">
    <property type="entry name" value="PRTases_typeI"/>
    <property type="match status" value="1"/>
</dbReference>
<dbReference type="FunFam" id="3.40.50.2020:FF:000021">
    <property type="entry name" value="Adenine phosphoribosyltransferase"/>
    <property type="match status" value="1"/>
</dbReference>
<dbReference type="Gene3D" id="3.40.50.2020">
    <property type="match status" value="1"/>
</dbReference>
<dbReference type="HAMAP" id="MF_00004">
    <property type="entry name" value="Aden_phosphoribosyltr"/>
    <property type="match status" value="1"/>
</dbReference>
<dbReference type="InterPro" id="IPR005764">
    <property type="entry name" value="Ade_phspho_trans"/>
</dbReference>
<dbReference type="InterPro" id="IPR000836">
    <property type="entry name" value="PRibTrfase_dom"/>
</dbReference>
<dbReference type="InterPro" id="IPR029057">
    <property type="entry name" value="PRTase-like"/>
</dbReference>
<dbReference type="InterPro" id="IPR050054">
    <property type="entry name" value="UPRTase/APRTase"/>
</dbReference>
<dbReference type="NCBIfam" id="NF002634">
    <property type="entry name" value="PRK02304.1-3"/>
    <property type="match status" value="1"/>
</dbReference>
<dbReference type="NCBIfam" id="NF002636">
    <property type="entry name" value="PRK02304.1-5"/>
    <property type="match status" value="1"/>
</dbReference>
<dbReference type="PANTHER" id="PTHR32315">
    <property type="entry name" value="ADENINE PHOSPHORIBOSYLTRANSFERASE"/>
    <property type="match status" value="1"/>
</dbReference>
<dbReference type="PANTHER" id="PTHR32315:SF3">
    <property type="entry name" value="ADENINE PHOSPHORIBOSYLTRANSFERASE"/>
    <property type="match status" value="1"/>
</dbReference>
<dbReference type="Pfam" id="PF00156">
    <property type="entry name" value="Pribosyltran"/>
    <property type="match status" value="1"/>
</dbReference>
<dbReference type="SUPFAM" id="SSF53271">
    <property type="entry name" value="PRTase-like"/>
    <property type="match status" value="1"/>
</dbReference>
<dbReference type="PROSITE" id="PS00103">
    <property type="entry name" value="PUR_PYR_PR_TRANSFER"/>
    <property type="match status" value="1"/>
</dbReference>
<name>APT_RENSM</name>
<comment type="function">
    <text evidence="1">Catalyzes a salvage reaction resulting in the formation of AMP, that is energically less costly than de novo synthesis.</text>
</comment>
<comment type="catalytic activity">
    <reaction evidence="1">
        <text>AMP + diphosphate = 5-phospho-alpha-D-ribose 1-diphosphate + adenine</text>
        <dbReference type="Rhea" id="RHEA:16609"/>
        <dbReference type="ChEBI" id="CHEBI:16708"/>
        <dbReference type="ChEBI" id="CHEBI:33019"/>
        <dbReference type="ChEBI" id="CHEBI:58017"/>
        <dbReference type="ChEBI" id="CHEBI:456215"/>
        <dbReference type="EC" id="2.4.2.7"/>
    </reaction>
</comment>
<comment type="pathway">
    <text evidence="1">Purine metabolism; AMP biosynthesis via salvage pathway; AMP from adenine: step 1/1.</text>
</comment>
<comment type="subunit">
    <text evidence="1">Homodimer.</text>
</comment>
<comment type="subcellular location">
    <subcellularLocation>
        <location evidence="1">Cytoplasm</location>
    </subcellularLocation>
</comment>
<comment type="similarity">
    <text evidence="1">Belongs to the purine/pyrimidine phosphoribosyltransferase family.</text>
</comment>
<accession>A9WQH7</accession>
<organism>
    <name type="scientific">Renibacterium salmoninarum (strain ATCC 33209 / DSM 20767 / JCM 11484 / NBRC 15589 / NCIMB 2235)</name>
    <dbReference type="NCBI Taxonomy" id="288705"/>
    <lineage>
        <taxon>Bacteria</taxon>
        <taxon>Bacillati</taxon>
        <taxon>Actinomycetota</taxon>
        <taxon>Actinomycetes</taxon>
        <taxon>Micrococcales</taxon>
        <taxon>Micrococcaceae</taxon>
        <taxon>Renibacterium</taxon>
    </lineage>
</organism>
<keyword id="KW-0963">Cytoplasm</keyword>
<keyword id="KW-0328">Glycosyltransferase</keyword>
<keyword id="KW-0660">Purine salvage</keyword>
<keyword id="KW-1185">Reference proteome</keyword>
<keyword id="KW-0808">Transferase</keyword>
<gene>
    <name evidence="1" type="primary">apt</name>
    <name type="ordered locus">RSal33209_0800</name>
</gene>
<sequence>MGIHAEQPKESIEEQIQRLCATVPDYPEPGITFRDLTPVFADGAALRAVVDALVEPFAGQFDAVAGVEARGFLLAAAAAYATGTGVITVRKAGKLPRAVYTEHYSLEYGTAALELHRDDLPAGSRVLILDDVLATGGTLAATSKLFAKAGVNVAGYGVVLELAELHGREALAGHQIRSLVRL</sequence>
<feature type="chain" id="PRO_0000329369" description="Adenine phosphoribosyltransferase">
    <location>
        <begin position="1"/>
        <end position="182"/>
    </location>
</feature>
<evidence type="ECO:0000255" key="1">
    <source>
        <dbReference type="HAMAP-Rule" id="MF_00004"/>
    </source>
</evidence>
<proteinExistence type="inferred from homology"/>
<protein>
    <recommendedName>
        <fullName evidence="1">Adenine phosphoribosyltransferase</fullName>
        <shortName evidence="1">APRT</shortName>
        <ecNumber evidence="1">2.4.2.7</ecNumber>
    </recommendedName>
</protein>
<reference key="1">
    <citation type="journal article" date="2008" name="J. Bacteriol.">
        <title>Genome sequence of the fish pathogen Renibacterium salmoninarum suggests reductive evolution away from an environmental Arthrobacter ancestor.</title>
        <authorList>
            <person name="Wiens G.D."/>
            <person name="Rockey D.D."/>
            <person name="Wu Z."/>
            <person name="Chang J."/>
            <person name="Levy R."/>
            <person name="Crane S."/>
            <person name="Chen D.S."/>
            <person name="Capri G.R."/>
            <person name="Burnett J.R."/>
            <person name="Sudheesh P.S."/>
            <person name="Schipma M.J."/>
            <person name="Burd H."/>
            <person name="Bhattacharyya A."/>
            <person name="Rhodes L.D."/>
            <person name="Kaul R."/>
            <person name="Strom M.S."/>
        </authorList>
    </citation>
    <scope>NUCLEOTIDE SEQUENCE [LARGE SCALE GENOMIC DNA]</scope>
    <source>
        <strain>ATCC 33209 / DSM 20767 / JCM 11484 / NBRC 15589 / NCIMB 2235</strain>
    </source>
</reference>